<evidence type="ECO:0000255" key="1"/>
<evidence type="ECO:0000256" key="2">
    <source>
        <dbReference type="SAM" id="MobiDB-lite"/>
    </source>
</evidence>
<evidence type="ECO:0000269" key="3">
    <source>
    </source>
</evidence>
<evidence type="ECO:0000303" key="4">
    <source>
    </source>
</evidence>
<evidence type="ECO:0000303" key="5">
    <source>
    </source>
</evidence>
<evidence type="ECO:0000305" key="6"/>
<evidence type="ECO:0000305" key="7">
    <source>
    </source>
</evidence>
<reference key="1">
    <citation type="journal article" date="2003" name="Regul. Pept.">
        <title>Identification of three novel Phyllomedusa sauvagei dermaseptins (sVI-sVIII) by cloning from a skin secretion-derived cDNA library.</title>
        <authorList>
            <person name="Chen T."/>
            <person name="Tang L."/>
            <person name="Shaw C."/>
        </authorList>
    </citation>
    <scope>NUCLEOTIDE SEQUENCE [MRNA]</scope>
    <scope>PROTEIN SEQUENCE OF 46-73</scope>
    <scope>AMIDATION AT GLN-73</scope>
    <scope>SUBCELLULAR LOCATION</scope>
    <source>
        <tissue>Skin</tissue>
    </source>
</reference>
<reference key="2">
    <citation type="journal article" date="2008" name="Peptides">
        <title>A consistent nomenclature of antimicrobial peptides isolated from frogs of the subfamily Phyllomedusinae.</title>
        <authorList>
            <person name="Amiche M."/>
            <person name="Ladram A."/>
            <person name="Nicolas P."/>
        </authorList>
    </citation>
    <scope>NOMENCLATURE</scope>
</reference>
<dbReference type="EMBL" id="AJ564792">
    <property type="protein sequence ID" value="CAD92230.1"/>
    <property type="molecule type" value="mRNA"/>
</dbReference>
<dbReference type="GO" id="GO:0005576">
    <property type="term" value="C:extracellular region"/>
    <property type="evidence" value="ECO:0007669"/>
    <property type="project" value="UniProtKB-SubCell"/>
</dbReference>
<dbReference type="GO" id="GO:0045087">
    <property type="term" value="P:innate immune response"/>
    <property type="evidence" value="ECO:0007669"/>
    <property type="project" value="UniProtKB-KW"/>
</dbReference>
<dbReference type="InterPro" id="IPR022731">
    <property type="entry name" value="Dermaseptin_dom"/>
</dbReference>
<dbReference type="InterPro" id="IPR004275">
    <property type="entry name" value="Frog_antimicrobial_propeptide"/>
</dbReference>
<dbReference type="InterPro" id="IPR016322">
    <property type="entry name" value="FSAP"/>
</dbReference>
<dbReference type="Pfam" id="PF12121">
    <property type="entry name" value="DD_K"/>
    <property type="match status" value="1"/>
</dbReference>
<dbReference type="Pfam" id="PF03032">
    <property type="entry name" value="FSAP_sig_propep"/>
    <property type="match status" value="1"/>
</dbReference>
<dbReference type="PIRSF" id="PIRSF001822">
    <property type="entry name" value="Dermaseptin_precursor"/>
    <property type="match status" value="1"/>
</dbReference>
<protein>
    <recommendedName>
        <fullName evidence="5">Dermaseptin-S7</fullName>
        <shortName evidence="5">DRS-S7</shortName>
    </recommendedName>
    <alternativeName>
        <fullName evidence="4">Dermaseptin DS VII</fullName>
    </alternativeName>
</protein>
<accession>Q7T3K8</accession>
<keyword id="KW-0027">Amidation</keyword>
<keyword id="KW-0878">Amphibian defense peptide</keyword>
<keyword id="KW-0929">Antimicrobial</keyword>
<keyword id="KW-0165">Cleavage on pair of basic residues</keyword>
<keyword id="KW-0903">Direct protein sequencing</keyword>
<keyword id="KW-0391">Immunity</keyword>
<keyword id="KW-0399">Innate immunity</keyword>
<keyword id="KW-0964">Secreted</keyword>
<keyword id="KW-0732">Signal</keyword>
<comment type="function">
    <text evidence="6">Antimicrobial peptide.</text>
</comment>
<comment type="subcellular location">
    <subcellularLocation>
        <location evidence="3">Secreted</location>
    </subcellularLocation>
</comment>
<comment type="tissue specificity">
    <text evidence="7">Expressed by the skin glands.</text>
</comment>
<comment type="similarity">
    <text evidence="6">Belongs to the frog skin active peptide (FSAP) family. Dermaseptin subfamily.</text>
</comment>
<comment type="online information" name="The antimicrobial peptide database">
    <link uri="https://wangapd3.com/database/query_output.php?ID=0934"/>
</comment>
<organism>
    <name type="scientific">Phyllomedusa sauvagei</name>
    <name type="common">Sauvage's leaf frog</name>
    <dbReference type="NCBI Taxonomy" id="8395"/>
    <lineage>
        <taxon>Eukaryota</taxon>
        <taxon>Metazoa</taxon>
        <taxon>Chordata</taxon>
        <taxon>Craniata</taxon>
        <taxon>Vertebrata</taxon>
        <taxon>Euteleostomi</taxon>
        <taxon>Amphibia</taxon>
        <taxon>Batrachia</taxon>
        <taxon>Anura</taxon>
        <taxon>Neobatrachia</taxon>
        <taxon>Hyloidea</taxon>
        <taxon>Hylidae</taxon>
        <taxon>Phyllomedusinae</taxon>
        <taxon>Phyllomedusa</taxon>
    </lineage>
</organism>
<sequence length="76" mass="8617">MDILKKSLFLVLFLGLISLSFCEEEKRENEDEEEQEDDEQSEEKRGLWKSLLKNVGKAAGKAALNAVTDMVNQGEQ</sequence>
<feature type="signal peptide" evidence="1">
    <location>
        <begin position="1"/>
        <end position="22"/>
    </location>
</feature>
<feature type="propeptide" id="PRO_0000449589" evidence="3">
    <location>
        <begin position="23"/>
        <end position="45"/>
    </location>
</feature>
<feature type="peptide" id="PRO_5004291568" description="Dermaseptin-S7" evidence="3">
    <location>
        <begin position="46"/>
        <end position="73"/>
    </location>
</feature>
<feature type="propeptide" id="PRO_0000449590" evidence="3">
    <location>
        <begin position="75"/>
        <end position="76"/>
    </location>
</feature>
<feature type="region of interest" description="Disordered" evidence="2">
    <location>
        <begin position="25"/>
        <end position="45"/>
    </location>
</feature>
<feature type="compositionally biased region" description="Acidic residues" evidence="2">
    <location>
        <begin position="30"/>
        <end position="41"/>
    </location>
</feature>
<feature type="modified residue" description="Glutamine amide" evidence="3">
    <location>
        <position position="73"/>
    </location>
</feature>
<proteinExistence type="evidence at protein level"/>
<name>DRS7_PHYSA</name>